<sequence>MKPINNHSFFRSLCGLSCISRLSVEEQCTRDYHRIWDDWAREGTTTENRIQAVRLLKICLDTREPVLNLSLLKLRSLPPLPLHIRELNISNNELISLPENSPLLTELHVNGNNLNILPTLPSQLIKLNISFNRNLSCLPSLPPYLQSLSARFNSLETLPELPSTLTILRIEGNRLTVLPELPHRLQELFVSGNRLQELPEFPQSLKYLKVGENQLRRLSRLPQELLALDVSNNLLTSLPENIITLPICTNVNISGNPLSTHVLQSLQRLTSSPDYHGPQIYFSMSDGQQNTLHRPLADAVTAWFPENKQSDVSQIWHAFEHEEHANTFSAFLDRLSDTVSARNTSGFREQVAAWLEKLSASAELRQQSFAVAADATESCEDRVALTWNNLRKTLLVHQASEGLFDNDTGALLSLGREMFRLEILEDIARDKVRTLHFVDEIEVYLAFQTMLAEKLQLSTAVKEMRFYGVSGVTANDLRTAEAMVRSREENEFTDWFSLWGPWHAVLKRTEADRWAQAEEQKYEMLENEYSQRVADRLKASGLSGDADAEREAGAQVMRETEQQIYRQLTDEVLA</sequence>
<organism>
    <name type="scientific">Shigella flexneri</name>
    <dbReference type="NCBI Taxonomy" id="623"/>
    <lineage>
        <taxon>Bacteria</taxon>
        <taxon>Pseudomonadati</taxon>
        <taxon>Pseudomonadota</taxon>
        <taxon>Gammaproteobacteria</taxon>
        <taxon>Enterobacterales</taxon>
        <taxon>Enterobacteriaceae</taxon>
        <taxon>Shigella</taxon>
    </lineage>
</organism>
<geneLocation type="plasmid">
    <name>pWR100</name>
</geneLocation>
<geneLocation type="plasmid">
    <name>pWR501</name>
</geneLocation>
<geneLocation type="plasmid">
    <name>pCP301</name>
</geneLocation>
<evidence type="ECO:0000250" key="1"/>
<evidence type="ECO:0000250" key="2">
    <source>
        <dbReference type="UniProtKB" id="P0CE12"/>
    </source>
</evidence>
<evidence type="ECO:0000255" key="3">
    <source>
        <dbReference type="PROSITE-ProRule" id="PRU01398"/>
    </source>
</evidence>
<evidence type="ECO:0000305" key="4"/>
<gene>
    <name type="primary">ipaH4.5</name>
    <name type="ordered locus">CP0079</name>
</gene>
<protein>
    <recommendedName>
        <fullName>Probable E3 ubiquitin-protein ligase ipaH4.5</fullName>
        <ecNumber>2.3.2.27</ecNumber>
    </recommendedName>
    <alternativeName>
        <fullName evidence="4">Probable RING-type E3 ubiquitin transferase ipaH4.5</fullName>
    </alternativeName>
</protein>
<accession>P18009</accession>
<accession>Q99QQ2</accession>
<reference key="1">
    <citation type="journal article" date="1991" name="Mol. Microbiol.">
        <title>Sequence variation in two ipaH genes of Shigella flexneri 5 and homology to the LRG-like family of proteins.</title>
        <authorList>
            <person name="Venkatesan M.M."/>
            <person name="Buysse J.M."/>
            <person name="Hartman A.B."/>
        </authorList>
    </citation>
    <scope>NUCLEOTIDE SEQUENCE [GENOMIC DNA]</scope>
    <scope>PROTEIN SEQUENCE OF 1-7</scope>
    <scope>SUBCELLULAR LOCATION</scope>
    <source>
        <strain>M90T / Serotype 5a</strain>
        <plasmid>pWR100</plasmid>
    </source>
</reference>
<reference key="2">
    <citation type="journal article" date="2000" name="Mol. Microbiol.">
        <title>The virulence plasmid pWR100 and the repertoire of proteins secreted by the type III secretion apparatus of Shigella flexneri.</title>
        <authorList>
            <person name="Buchrieser C."/>
            <person name="Glaser P."/>
            <person name="Rusniok C."/>
            <person name="Nedjari H."/>
            <person name="d'Hauteville H."/>
            <person name="Kunst F."/>
            <person name="Sansonetti P.J."/>
            <person name="Parsot C."/>
        </authorList>
    </citation>
    <scope>NUCLEOTIDE SEQUENCE [GENOMIC DNA]</scope>
    <scope>PROTEIN SEQUENCE OF 1-7</scope>
    <scope>SUBCELLULAR LOCATION</scope>
    <source>
        <strain>M90T / Serotype 5a</strain>
        <plasmid>pWR100</plasmid>
    </source>
</reference>
<reference key="3">
    <citation type="journal article" date="2001" name="Infect. Immun.">
        <title>Complete DNA sequence and analysis of the large virulence plasmid of Shigella flexneri.</title>
        <authorList>
            <person name="Venkatesan M.M."/>
            <person name="Goldberg M.B."/>
            <person name="Rose D.J."/>
            <person name="Grotbeck E.J."/>
            <person name="Burland V."/>
            <person name="Blattner F.R."/>
        </authorList>
    </citation>
    <scope>NUCLEOTIDE SEQUENCE [GENOMIC DNA]</scope>
    <source>
        <strain>M90T / Serotype 5a</strain>
        <plasmid>pWR501</plasmid>
    </source>
</reference>
<reference key="4">
    <citation type="journal article" date="2002" name="Nucleic Acids Res.">
        <title>Genome sequence of Shigella flexneri 2a: insights into pathogenicity through comparison with genomes of Escherichia coli K12 and O157.</title>
        <authorList>
            <person name="Jin Q."/>
            <person name="Yuan Z."/>
            <person name="Xu J."/>
            <person name="Wang Y."/>
            <person name="Shen Y."/>
            <person name="Lu W."/>
            <person name="Wang J."/>
            <person name="Liu H."/>
            <person name="Yang J."/>
            <person name="Yang F."/>
            <person name="Zhang X."/>
            <person name="Zhang J."/>
            <person name="Yang G."/>
            <person name="Wu H."/>
            <person name="Qu D."/>
            <person name="Dong J."/>
            <person name="Sun L."/>
            <person name="Xue Y."/>
            <person name="Zhao A."/>
            <person name="Gao Y."/>
            <person name="Zhu J."/>
            <person name="Kan B."/>
            <person name="Ding K."/>
            <person name="Chen S."/>
            <person name="Cheng H."/>
            <person name="Yao Z."/>
            <person name="He B."/>
            <person name="Chen R."/>
            <person name="Ma D."/>
            <person name="Qiang B."/>
            <person name="Wen Y."/>
            <person name="Hou Y."/>
            <person name="Yu J."/>
        </authorList>
    </citation>
    <scope>NUCLEOTIDE SEQUENCE [LARGE SCALE GENOMIC DNA]</scope>
    <source>
        <strain>301 / Serotype 2a</strain>
        <plasmid>pCP301</plasmid>
    </source>
</reference>
<reference key="5">
    <citation type="journal article" date="1990" name="J. Bacteriol.">
        <title>Sequence and molecular characterization of a multicopy invasion plasmid antigen gene, ipaH, of Shigella flexneri.</title>
        <authorList>
            <person name="Hartman A.B."/>
            <person name="Venkatesan M.M."/>
            <person name="Oaks E.V."/>
            <person name="Buysse J.M."/>
        </authorList>
    </citation>
    <scope>NUCLEOTIDE SEQUENCE [GENOMIC DNA] OF 1-208</scope>
    <source>
        <strain>M90T / Serotype 5a</strain>
        <plasmid>pWR100</plasmid>
    </source>
</reference>
<reference key="6">
    <citation type="journal article" date="2001" name="J. Biol. Chem.">
        <title>Shigella protein IpaH(9.8) is secreted from bacteria within mammalian cells and transported to the nucleus.</title>
        <authorList>
            <person name="Toyotome T."/>
            <person name="Suzuki T."/>
            <person name="Kuwae A."/>
            <person name="Nonaka T."/>
            <person name="Fukuda H."/>
            <person name="Imajoh-Ohmi S."/>
            <person name="Toyofuku T."/>
            <person name="Hori M."/>
            <person name="Sasakawa C."/>
        </authorList>
    </citation>
    <scope>SUBCELLULAR LOCATION</scope>
    <scope>SECRETION VIA TYPE III SECRETION SYSTEM</scope>
    <source>
        <strain>YSH6000 / Serotype 2a</strain>
    </source>
</reference>
<dbReference type="EC" id="2.3.2.27"/>
<dbReference type="EMBL" id="M76445">
    <property type="protein sequence ID" value="AAA26528.1"/>
    <property type="molecule type" value="Genomic_DNA"/>
</dbReference>
<dbReference type="EMBL" id="AL391753">
    <property type="protein sequence ID" value="CAC05788.1"/>
    <property type="molecule type" value="Genomic_DNA"/>
</dbReference>
<dbReference type="EMBL" id="AF348706">
    <property type="protein sequence ID" value="AAK18395.1"/>
    <property type="molecule type" value="Genomic_DNA"/>
</dbReference>
<dbReference type="EMBL" id="AF386526">
    <property type="protein sequence ID" value="AAL72347.1"/>
    <property type="molecule type" value="Genomic_DNA"/>
</dbReference>
<dbReference type="EMBL" id="M32063">
    <property type="protein sequence ID" value="AAA26527.1"/>
    <property type="molecule type" value="Genomic_DNA"/>
</dbReference>
<dbReference type="PIR" id="S18248">
    <property type="entry name" value="B35149"/>
</dbReference>
<dbReference type="RefSeq" id="NP_085239.1">
    <property type="nucleotide sequence ID" value="NC_002698.1"/>
</dbReference>
<dbReference type="RefSeq" id="NP_858212.1">
    <property type="nucleotide sequence ID" value="NC_004851.1"/>
</dbReference>
<dbReference type="RefSeq" id="WP_010921638.1">
    <property type="nucleotide sequence ID" value="NZ_WACK01000004.1"/>
</dbReference>
<dbReference type="RefSeq" id="YP_009062470.1">
    <property type="nucleotide sequence ID" value="NC_024996.1"/>
</dbReference>
<dbReference type="SMR" id="P18009"/>
<dbReference type="STRING" id="198214.SF0722"/>
<dbReference type="PaxDb" id="198214-CP0079"/>
<dbReference type="GeneID" id="1238050"/>
<dbReference type="KEGG" id="sfl:CP0079"/>
<dbReference type="PATRIC" id="fig|198214.7.peg.5326"/>
<dbReference type="HOGENOM" id="CLU_018533_2_0_6"/>
<dbReference type="Proteomes" id="UP000001006">
    <property type="component" value="Plasmid pCP301"/>
</dbReference>
<dbReference type="GO" id="GO:0005576">
    <property type="term" value="C:extracellular region"/>
    <property type="evidence" value="ECO:0000314"/>
    <property type="project" value="UniProtKB"/>
</dbReference>
<dbReference type="GO" id="GO:0030430">
    <property type="term" value="C:host cell cytoplasm"/>
    <property type="evidence" value="ECO:0007669"/>
    <property type="project" value="UniProtKB-SubCell"/>
</dbReference>
<dbReference type="GO" id="GO:0004842">
    <property type="term" value="F:ubiquitin-protein transferase activity"/>
    <property type="evidence" value="ECO:0007669"/>
    <property type="project" value="InterPro"/>
</dbReference>
<dbReference type="GO" id="GO:0051865">
    <property type="term" value="P:protein autoubiquitination"/>
    <property type="evidence" value="ECO:0000314"/>
    <property type="project" value="CACAO"/>
</dbReference>
<dbReference type="GO" id="GO:0000209">
    <property type="term" value="P:protein polyubiquitination"/>
    <property type="evidence" value="ECO:0000314"/>
    <property type="project" value="CACAO"/>
</dbReference>
<dbReference type="GO" id="GO:0052170">
    <property type="term" value="P:symbiont-mediated suppression of host innate immune response"/>
    <property type="evidence" value="ECO:0000315"/>
    <property type="project" value="CACAO"/>
</dbReference>
<dbReference type="GO" id="GO:0039604">
    <property type="term" value="P:symbiont-mediated suppression of host translation"/>
    <property type="evidence" value="ECO:0000314"/>
    <property type="project" value="CACAO"/>
</dbReference>
<dbReference type="GO" id="GO:0006511">
    <property type="term" value="P:ubiquitin-dependent protein catabolic process"/>
    <property type="evidence" value="ECO:0000315"/>
    <property type="project" value="CACAO"/>
</dbReference>
<dbReference type="FunFam" id="1.20.58.90:FF:000007">
    <property type="entry name" value="E3 ubiquitin-protein ligase ipaH9.8"/>
    <property type="match status" value="1"/>
</dbReference>
<dbReference type="FunFam" id="1.20.1270.130:FF:000001">
    <property type="entry name" value="Invasion plasmid antigen IpaH"/>
    <property type="match status" value="1"/>
</dbReference>
<dbReference type="FunFam" id="1.20.58.360:FF:000001">
    <property type="entry name" value="Probable E3 ubiquitin-protein ligase ipaH7.8"/>
    <property type="match status" value="1"/>
</dbReference>
<dbReference type="Gene3D" id="1.20.58.90">
    <property type="match status" value="1"/>
</dbReference>
<dbReference type="Gene3D" id="3.80.10.10">
    <property type="entry name" value="Ribonuclease Inhibitor"/>
    <property type="match status" value="1"/>
</dbReference>
<dbReference type="Gene3D" id="1.20.58.360">
    <property type="entry name" value="Shigella T3SS effector IpaH defines"/>
    <property type="match status" value="1"/>
</dbReference>
<dbReference type="Gene3D" id="1.20.1270.130">
    <property type="entry name" value="Shigella T3SS effector IpaH domain"/>
    <property type="match status" value="1"/>
</dbReference>
<dbReference type="InterPro" id="IPR001611">
    <property type="entry name" value="Leu-rich_rpt"/>
</dbReference>
<dbReference type="InterPro" id="IPR051071">
    <property type="entry name" value="LRR-bact_E3_ubiq_ligases"/>
</dbReference>
<dbReference type="InterPro" id="IPR032675">
    <property type="entry name" value="LRR_dom_sf"/>
</dbReference>
<dbReference type="InterPro" id="IPR032674">
    <property type="entry name" value="LRR_E3_ligase_N"/>
</dbReference>
<dbReference type="InterPro" id="IPR029487">
    <property type="entry name" value="NEL_dom"/>
</dbReference>
<dbReference type="NCBIfam" id="NF046045">
    <property type="entry name" value="IpaH_Shig"/>
    <property type="match status" value="1"/>
</dbReference>
<dbReference type="PANTHER" id="PTHR47114">
    <property type="match status" value="1"/>
</dbReference>
<dbReference type="PANTHER" id="PTHR47114:SF2">
    <property type="entry name" value="OLIGODENDROCYTE-MYELIN GLYCOPROTEIN"/>
    <property type="match status" value="1"/>
</dbReference>
<dbReference type="Pfam" id="PF12468">
    <property type="entry name" value="LRR_TTSS"/>
    <property type="match status" value="1"/>
</dbReference>
<dbReference type="Pfam" id="PF14496">
    <property type="entry name" value="NEL"/>
    <property type="match status" value="1"/>
</dbReference>
<dbReference type="SMART" id="SM00364">
    <property type="entry name" value="LRR_BAC"/>
    <property type="match status" value="8"/>
</dbReference>
<dbReference type="SUPFAM" id="SSF52058">
    <property type="entry name" value="L domain-like"/>
    <property type="match status" value="1"/>
</dbReference>
<dbReference type="PROSITE" id="PS51450">
    <property type="entry name" value="LRR"/>
    <property type="match status" value="5"/>
</dbReference>
<dbReference type="PROSITE" id="PS52053">
    <property type="entry name" value="NEL"/>
    <property type="match status" value="1"/>
</dbReference>
<feature type="chain" id="PRO_0000084217" description="Probable E3 ubiquitin-protein ligase ipaH4.5">
    <location>
        <begin position="1"/>
        <end position="574"/>
    </location>
</feature>
<feature type="repeat" description="LRR 1">
    <location>
        <begin position="63"/>
        <end position="82"/>
    </location>
</feature>
<feature type="repeat" description="LRR 2">
    <location>
        <begin position="83"/>
        <end position="104"/>
    </location>
</feature>
<feature type="repeat" description="LRR 3">
    <location>
        <begin position="105"/>
        <end position="122"/>
    </location>
</feature>
<feature type="repeat" description="LRR 4">
    <location>
        <begin position="123"/>
        <end position="143"/>
    </location>
</feature>
<feature type="repeat" description="LRR 5">
    <location>
        <begin position="144"/>
        <end position="165"/>
    </location>
</feature>
<feature type="repeat" description="LRR 6">
    <location>
        <begin position="166"/>
        <end position="183"/>
    </location>
</feature>
<feature type="repeat" description="LRR 7">
    <location>
        <begin position="184"/>
        <end position="205"/>
    </location>
</feature>
<feature type="repeat" description="LRR 8">
    <location>
        <begin position="206"/>
        <end position="223"/>
    </location>
</feature>
<feature type="repeat" description="LRR 9">
    <location>
        <begin position="224"/>
        <end position="246"/>
    </location>
</feature>
<feature type="repeat" description="LRR 10">
    <location>
        <begin position="247"/>
        <end position="270"/>
    </location>
</feature>
<feature type="domain" description="NEL" evidence="3">
    <location>
        <begin position="295"/>
        <end position="574"/>
    </location>
</feature>
<feature type="region of interest" description="Interaction with target proteins" evidence="2">
    <location>
        <begin position="1"/>
        <end position="284"/>
    </location>
</feature>
<feature type="region of interest" description="Linker" evidence="2">
    <location>
        <begin position="285"/>
        <end position="292"/>
    </location>
</feature>
<feature type="region of interest" description="E3 ubiquitin-protein ligase catalytic domain" evidence="2">
    <location>
        <begin position="293"/>
        <end position="574"/>
    </location>
</feature>
<feature type="active site" description="Glycyl thioester intermediate" evidence="3">
    <location>
        <position position="379"/>
    </location>
</feature>
<feature type="sequence conflict" description="In Ref. 1; AAA26528." evidence="4" ref="1">
    <original>H</original>
    <variation>R</variation>
    <location>
        <position position="261"/>
    </location>
</feature>
<feature type="sequence conflict" description="In Ref. 1; AAA26528." evidence="4" ref="1">
    <original>E</original>
    <variation>Q</variation>
    <location>
        <position position="549"/>
    </location>
</feature>
<proteinExistence type="evidence at protein level"/>
<keyword id="KW-0903">Direct protein sequencing</keyword>
<keyword id="KW-1035">Host cytoplasm</keyword>
<keyword id="KW-0433">Leucine-rich repeat</keyword>
<keyword id="KW-0614">Plasmid</keyword>
<keyword id="KW-1185">Reference proteome</keyword>
<keyword id="KW-0677">Repeat</keyword>
<keyword id="KW-0964">Secreted</keyword>
<keyword id="KW-0808">Transferase</keyword>
<keyword id="KW-0832">Ubl conjugation</keyword>
<keyword id="KW-0833">Ubl conjugation pathway</keyword>
<keyword id="KW-0843">Virulence</keyword>
<comment type="function">
    <text evidence="1">Effector proteins function to alter host cell physiology and promote bacterial survival in host tissues. This protein is an E3 ubiquitin ligase that interferes with host's ubiquitination pathway.</text>
</comment>
<comment type="catalytic activity">
    <reaction>
        <text>S-ubiquitinyl-[E2 ubiquitin-conjugating enzyme]-L-cysteine + [acceptor protein]-L-lysine = [E2 ubiquitin-conjugating enzyme]-L-cysteine + N(6)-ubiquitinyl-[acceptor protein]-L-lysine.</text>
        <dbReference type="EC" id="2.3.2.27"/>
    </reaction>
</comment>
<comment type="subcellular location">
    <subcellularLocation>
        <location>Secreted</location>
    </subcellularLocation>
    <subcellularLocation>
        <location evidence="4">Host cytoplasm</location>
    </subcellularLocation>
    <text evidence="4">Secreted via Mxi-Spa type III secretion system (T3SS), and delivered into the host cytoplasm.</text>
</comment>
<comment type="domain">
    <text evidence="2">The LRR (leucine-rich repeat) domain forms a slightly curved solenoid and may mediate interaction with target proteins.</text>
</comment>
<comment type="PTM">
    <text evidence="1">Ubiquitinated in the presence of host E1 ubiquitin-activating enzyme, E2 ubiquitin-conjugating enzyme and ubiquitin.</text>
</comment>
<comment type="similarity">
    <text evidence="3 4">Belongs to the LRR-containing bacterial E3 ligase family.</text>
</comment>
<name>IPA4_SHIFL</name>